<proteinExistence type="evidence at protein level"/>
<evidence type="ECO:0000269" key="1">
    <source>
    </source>
</evidence>
<evidence type="ECO:0000305" key="2"/>
<gene>
    <name type="primary">ompV</name>
    <name type="ordered locus">VC_1318</name>
</gene>
<accession>P06111</accession>
<accession>Q9JQ04</accession>
<dbReference type="EMBL" id="X04717">
    <property type="protein sequence ID" value="CAA28424.1"/>
    <property type="molecule type" value="Genomic_DNA"/>
</dbReference>
<dbReference type="EMBL" id="AE003852">
    <property type="protein sequence ID" value="AAF94476.1"/>
    <property type="molecule type" value="Genomic_DNA"/>
</dbReference>
<dbReference type="PIR" id="A27872">
    <property type="entry name" value="A27872"/>
</dbReference>
<dbReference type="RefSeq" id="NP_230962.1">
    <property type="nucleotide sequence ID" value="NC_002505.1"/>
</dbReference>
<dbReference type="RefSeq" id="WP_000717059.1">
    <property type="nucleotide sequence ID" value="NZ_LT906614.1"/>
</dbReference>
<dbReference type="STRING" id="243277.VC_1318"/>
<dbReference type="EnsemblBacteria" id="AAF94476">
    <property type="protein sequence ID" value="AAF94476"/>
    <property type="gene ID" value="VC_1318"/>
</dbReference>
<dbReference type="GeneID" id="69720002"/>
<dbReference type="KEGG" id="vch:VC_1318"/>
<dbReference type="PATRIC" id="fig|243277.26.peg.1258"/>
<dbReference type="eggNOG" id="COG3713">
    <property type="taxonomic scope" value="Bacteria"/>
</dbReference>
<dbReference type="HOGENOM" id="CLU_063465_1_1_6"/>
<dbReference type="Proteomes" id="UP000000584">
    <property type="component" value="Chromosome 1"/>
</dbReference>
<dbReference type="GO" id="GO:0009279">
    <property type="term" value="C:cell outer membrane"/>
    <property type="evidence" value="ECO:0000318"/>
    <property type="project" value="GO_Central"/>
</dbReference>
<dbReference type="GO" id="GO:0009252">
    <property type="term" value="P:peptidoglycan biosynthetic process"/>
    <property type="evidence" value="ECO:0000318"/>
    <property type="project" value="GO_Central"/>
</dbReference>
<dbReference type="InterPro" id="IPR010583">
    <property type="entry name" value="MipA"/>
</dbReference>
<dbReference type="InterPro" id="IPR054915">
    <property type="entry name" value="OmpV"/>
</dbReference>
<dbReference type="NCBIfam" id="NF045789">
    <property type="entry name" value="OmpVVibrio"/>
    <property type="match status" value="1"/>
</dbReference>
<dbReference type="PANTHER" id="PTHR38776">
    <property type="entry name" value="MLTA-INTERACTING PROTEIN-RELATED"/>
    <property type="match status" value="1"/>
</dbReference>
<dbReference type="PANTHER" id="PTHR38776:SF1">
    <property type="entry name" value="MLTA-INTERACTING PROTEIN-RELATED"/>
    <property type="match status" value="1"/>
</dbReference>
<dbReference type="Pfam" id="PF06629">
    <property type="entry name" value="MipA"/>
    <property type="match status" value="1"/>
</dbReference>
<keyword id="KW-0998">Cell outer membrane</keyword>
<keyword id="KW-0903">Direct protein sequencing</keyword>
<keyword id="KW-0472">Membrane</keyword>
<keyword id="KW-1185">Reference proteome</keyword>
<keyword id="KW-0732">Signal</keyword>
<reference key="1">
    <citation type="journal article" date="1986" name="Mol. Gen. Genet.">
        <title>Nucleotide sequence of ompV, the gene for a major Vibrio cholerae outer membrane protein.</title>
        <authorList>
            <person name="Pohlner J."/>
            <person name="Meyer T.F."/>
            <person name="Jalajakumari M.B."/>
            <person name="Manning P.A."/>
        </authorList>
    </citation>
    <scope>NUCLEOTIDE SEQUENCE [GENOMIC DNA]</scope>
    <scope>PROTEIN SEQUENCE OF 20-34</scope>
</reference>
<reference key="2">
    <citation type="journal article" date="2000" name="Nature">
        <title>DNA sequence of both chromosomes of the cholera pathogen Vibrio cholerae.</title>
        <authorList>
            <person name="Heidelberg J.F."/>
            <person name="Eisen J.A."/>
            <person name="Nelson W.C."/>
            <person name="Clayton R.A."/>
            <person name="Gwinn M.L."/>
            <person name="Dodson R.J."/>
            <person name="Haft D.H."/>
            <person name="Hickey E.K."/>
            <person name="Peterson J.D."/>
            <person name="Umayam L.A."/>
            <person name="Gill S.R."/>
            <person name="Nelson K.E."/>
            <person name="Read T.D."/>
            <person name="Tettelin H."/>
            <person name="Richardson D.L."/>
            <person name="Ermolaeva M.D."/>
            <person name="Vamathevan J.J."/>
            <person name="Bass S."/>
            <person name="Qin H."/>
            <person name="Dragoi I."/>
            <person name="Sellers P."/>
            <person name="McDonald L.A."/>
            <person name="Utterback T.R."/>
            <person name="Fleischmann R.D."/>
            <person name="Nierman W.C."/>
            <person name="White O."/>
            <person name="Salzberg S.L."/>
            <person name="Smith H.O."/>
            <person name="Colwell R.R."/>
            <person name="Mekalanos J.J."/>
            <person name="Venter J.C."/>
            <person name="Fraser C.M."/>
        </authorList>
    </citation>
    <scope>NUCLEOTIDE SEQUENCE [LARGE SCALE GENOMIC DNA]</scope>
    <source>
        <strain>ATCC 39315 / El Tor Inaba N16961</strain>
    </source>
</reference>
<reference key="3">
    <citation type="journal article" date="1989" name="J. Bacteriol.">
        <title>Broad-host-range vectors for delivery of TnphoA: use in genetic analysis of secreted virulence determinants of Vibrio cholerae.</title>
        <authorList>
            <person name="Taylor R.K."/>
            <person name="Manoil C."/>
            <person name="Mekalanos J.J."/>
        </authorList>
    </citation>
    <scope>NUCLEOTIDE SEQUENCE [GENOMIC DNA] OF 1-63</scope>
</reference>
<comment type="subcellular location">
    <subcellularLocation>
        <location>Cell outer membrane</location>
    </subcellularLocation>
</comment>
<comment type="similarity">
    <text evidence="2">Belongs to the MipA/OmpV family.</text>
</comment>
<organism>
    <name type="scientific">Vibrio cholerae serotype O1 (strain ATCC 39315 / El Tor Inaba N16961)</name>
    <dbReference type="NCBI Taxonomy" id="243277"/>
    <lineage>
        <taxon>Bacteria</taxon>
        <taxon>Pseudomonadati</taxon>
        <taxon>Pseudomonadota</taxon>
        <taxon>Gammaproteobacteria</taxon>
        <taxon>Vibrionales</taxon>
        <taxon>Vibrionaceae</taxon>
        <taxon>Vibrio</taxon>
    </lineage>
</organism>
<sequence>MKKIALFITASLIAGNALAAQTYIRNGNIYTHEGQWAAEVGAFGSTDLLKDQDKSYGALLNFGYHGEDFNADLSGLNYRFFGNTGDIVNLGTYLTGSGVAYDQDSANSVKGMDKRKATVDLGLNADIALGDGTVSTYFQHDILNENKGYKTGVNYFHIIDLGVADLVPFAGISYQSSDYNNYYFGVKDKEATAQRKAYHAGGDFSYNLGYKLVYPINDRWEITQTSAYTRLGSDIAHSPIVDSANQWLVGATVAYHF</sequence>
<feature type="signal peptide" evidence="1">
    <location>
        <begin position="1"/>
        <end position="19"/>
    </location>
</feature>
<feature type="chain" id="PRO_0000019095" description="Outer membrane protein OmpV">
    <location>
        <begin position="20"/>
        <end position="257"/>
    </location>
</feature>
<name>OMPV_VIBCH</name>
<protein>
    <recommendedName>
        <fullName>Outer membrane protein OmpV</fullName>
    </recommendedName>
</protein>